<gene>
    <name evidence="2" type="primary">purD</name>
    <name type="ordered locus">PF0422</name>
</gene>
<name>PUR2_PYRFU</name>
<proteinExistence type="inferred from homology"/>
<accession>Q8U3N5</accession>
<reference key="1">
    <citation type="journal article" date="1999" name="Genetics">
        <title>Divergence of the hyperthermophilic archaea Pyrococcus furiosus and P. horikoshii inferred from complete genomic sequences.</title>
        <authorList>
            <person name="Maeder D.L."/>
            <person name="Weiss R.B."/>
            <person name="Dunn D.M."/>
            <person name="Cherry J.L."/>
            <person name="Gonzalez J.M."/>
            <person name="DiRuggiero J."/>
            <person name="Robb F.T."/>
        </authorList>
    </citation>
    <scope>NUCLEOTIDE SEQUENCE [LARGE SCALE GENOMIC DNA]</scope>
    <source>
        <strain>ATCC 43587 / DSM 3638 / JCM 8422 / Vc1</strain>
    </source>
</reference>
<comment type="catalytic activity">
    <reaction evidence="2">
        <text>5-phospho-beta-D-ribosylamine + glycine + ATP = N(1)-(5-phospho-beta-D-ribosyl)glycinamide + ADP + phosphate + H(+)</text>
        <dbReference type="Rhea" id="RHEA:17453"/>
        <dbReference type="ChEBI" id="CHEBI:15378"/>
        <dbReference type="ChEBI" id="CHEBI:30616"/>
        <dbReference type="ChEBI" id="CHEBI:43474"/>
        <dbReference type="ChEBI" id="CHEBI:57305"/>
        <dbReference type="ChEBI" id="CHEBI:58681"/>
        <dbReference type="ChEBI" id="CHEBI:143788"/>
        <dbReference type="ChEBI" id="CHEBI:456216"/>
        <dbReference type="EC" id="6.3.4.13"/>
    </reaction>
</comment>
<comment type="cofactor">
    <cofactor evidence="1">
        <name>Mg(2+)</name>
        <dbReference type="ChEBI" id="CHEBI:18420"/>
    </cofactor>
    <cofactor evidence="1">
        <name>Mn(2+)</name>
        <dbReference type="ChEBI" id="CHEBI:29035"/>
    </cofactor>
    <text evidence="1">Binds 2 magnesium or manganese ions per subunit.</text>
</comment>
<comment type="pathway">
    <text evidence="2">Purine metabolism; IMP biosynthesis via de novo pathway; N(1)-(5-phospho-D-ribosyl)glycinamide from 5-phospho-alpha-D-ribose 1-diphosphate: step 2/2.</text>
</comment>
<comment type="similarity">
    <text evidence="2">Belongs to the GARS family.</text>
</comment>
<keyword id="KW-0067">ATP-binding</keyword>
<keyword id="KW-0436">Ligase</keyword>
<keyword id="KW-0460">Magnesium</keyword>
<keyword id="KW-0464">Manganese</keyword>
<keyword id="KW-0479">Metal-binding</keyword>
<keyword id="KW-0547">Nucleotide-binding</keyword>
<keyword id="KW-0658">Purine biosynthesis</keyword>
<keyword id="KW-1185">Reference proteome</keyword>
<feature type="chain" id="PRO_0000151515" description="Phosphoribosylamine--glycine ligase">
    <location>
        <begin position="1"/>
        <end position="439"/>
    </location>
</feature>
<feature type="domain" description="ATP-grasp" evidence="2">
    <location>
        <begin position="109"/>
        <end position="317"/>
    </location>
</feature>
<feature type="binding site" evidence="2">
    <location>
        <begin position="136"/>
        <end position="195"/>
    </location>
    <ligand>
        <name>ATP</name>
        <dbReference type="ChEBI" id="CHEBI:30616"/>
    </ligand>
</feature>
<feature type="binding site" evidence="2">
    <location>
        <position position="275"/>
    </location>
    <ligand>
        <name>Mg(2+)</name>
        <dbReference type="ChEBI" id="CHEBI:18420"/>
        <label>1</label>
    </ligand>
</feature>
<feature type="binding site" evidence="2">
    <location>
        <position position="275"/>
    </location>
    <ligand>
        <name>Mn(2+)</name>
        <dbReference type="ChEBI" id="CHEBI:29035"/>
        <label>1</label>
    </ligand>
</feature>
<feature type="binding site" evidence="2">
    <location>
        <position position="287"/>
    </location>
    <ligand>
        <name>Mg(2+)</name>
        <dbReference type="ChEBI" id="CHEBI:18420"/>
        <label>1</label>
    </ligand>
</feature>
<feature type="binding site" evidence="2">
    <location>
        <position position="287"/>
    </location>
    <ligand>
        <name>Mg(2+)</name>
        <dbReference type="ChEBI" id="CHEBI:18420"/>
        <label>2</label>
    </ligand>
</feature>
<feature type="binding site" evidence="2">
    <location>
        <position position="287"/>
    </location>
    <ligand>
        <name>Mn(2+)</name>
        <dbReference type="ChEBI" id="CHEBI:29035"/>
        <label>1</label>
    </ligand>
</feature>
<feature type="binding site" evidence="2">
    <location>
        <position position="287"/>
    </location>
    <ligand>
        <name>Mn(2+)</name>
        <dbReference type="ChEBI" id="CHEBI:29035"/>
        <label>2</label>
    </ligand>
</feature>
<feature type="binding site" evidence="2">
    <location>
        <position position="289"/>
    </location>
    <ligand>
        <name>Mg(2+)</name>
        <dbReference type="ChEBI" id="CHEBI:18420"/>
        <label>2</label>
    </ligand>
</feature>
<feature type="binding site" evidence="2">
    <location>
        <position position="289"/>
    </location>
    <ligand>
        <name>Mn(2+)</name>
        <dbReference type="ChEBI" id="CHEBI:29035"/>
        <label>2</label>
    </ligand>
</feature>
<protein>
    <recommendedName>
        <fullName evidence="2">Phosphoribosylamine--glycine ligase</fullName>
        <ecNumber evidence="2">6.3.4.13</ecNumber>
    </recommendedName>
    <alternativeName>
        <fullName evidence="2">GARS</fullName>
    </alternativeName>
    <alternativeName>
        <fullName evidence="2">Glycinamide ribonucleotide synthetase</fullName>
    </alternativeName>
    <alternativeName>
        <fullName evidence="2">Phosphoribosylglycinamide synthetase</fullName>
    </alternativeName>
</protein>
<sequence>MVKVLLVGGGGREHAIGEALVKGGAELYVVSKHKNPGLARIAKDYGLARETDVEKVVEFAEKWKVDFAFIGPEAPLEAGVVNALEERGIPAVGPTKEAARLETNKAWAREFMERNKIPGRKLFRVFDDPKEMKEWIDEFGKPVVVKPLGLTGGKGVKVVGYQLKDNEEAKEYAEYLIRKDGKVLIEERTDGVEFTFQVFSDGKKVVPMPLAQDYPHAYEGDVGPITGGMGSYSCSNHLLPFITKSDWEKALETLQKTVEAMYKEGYPYKGILYGQFMLSKDGPVIIEYNARFGDPEAINVLSILEDNLVEISERIIDGNLRDVKFSNMATVVKYIAPQGYPENPIKGVRIEVNEDKIREEGARLIFASIDENYTLLGSRALAVVGVSENLEEAEKIAQSAIRHVKGPIFYRKDVGTRESIEKRIKIMKSLRGDFDVNSC</sequence>
<dbReference type="EC" id="6.3.4.13" evidence="2"/>
<dbReference type="EMBL" id="AE009950">
    <property type="protein sequence ID" value="AAL80546.1"/>
    <property type="molecule type" value="Genomic_DNA"/>
</dbReference>
<dbReference type="SMR" id="Q8U3N5"/>
<dbReference type="STRING" id="186497.PF0422"/>
<dbReference type="PaxDb" id="186497-PF0422"/>
<dbReference type="KEGG" id="pfu:PF0422"/>
<dbReference type="PATRIC" id="fig|186497.12.peg.438"/>
<dbReference type="eggNOG" id="arCOG04415">
    <property type="taxonomic scope" value="Archaea"/>
</dbReference>
<dbReference type="HOGENOM" id="CLU_027420_3_0_2"/>
<dbReference type="PhylomeDB" id="Q8U3N5"/>
<dbReference type="UniPathway" id="UPA00074">
    <property type="reaction ID" value="UER00125"/>
</dbReference>
<dbReference type="Proteomes" id="UP000001013">
    <property type="component" value="Chromosome"/>
</dbReference>
<dbReference type="GO" id="GO:0005524">
    <property type="term" value="F:ATP binding"/>
    <property type="evidence" value="ECO:0007669"/>
    <property type="project" value="UniProtKB-KW"/>
</dbReference>
<dbReference type="GO" id="GO:0046872">
    <property type="term" value="F:metal ion binding"/>
    <property type="evidence" value="ECO:0007669"/>
    <property type="project" value="UniProtKB-KW"/>
</dbReference>
<dbReference type="GO" id="GO:0004637">
    <property type="term" value="F:phosphoribosylamine-glycine ligase activity"/>
    <property type="evidence" value="ECO:0007669"/>
    <property type="project" value="UniProtKB-UniRule"/>
</dbReference>
<dbReference type="GO" id="GO:0006189">
    <property type="term" value="P:'de novo' IMP biosynthetic process"/>
    <property type="evidence" value="ECO:0007669"/>
    <property type="project" value="UniProtKB-UniRule"/>
</dbReference>
<dbReference type="GO" id="GO:0009113">
    <property type="term" value="P:purine nucleobase biosynthetic process"/>
    <property type="evidence" value="ECO:0007669"/>
    <property type="project" value="InterPro"/>
</dbReference>
<dbReference type="Gene3D" id="3.40.50.20">
    <property type="match status" value="1"/>
</dbReference>
<dbReference type="Gene3D" id="3.30.1490.20">
    <property type="entry name" value="ATP-grasp fold, A domain"/>
    <property type="match status" value="1"/>
</dbReference>
<dbReference type="Gene3D" id="3.30.470.20">
    <property type="entry name" value="ATP-grasp fold, B domain"/>
    <property type="match status" value="1"/>
</dbReference>
<dbReference type="Gene3D" id="3.90.600.10">
    <property type="entry name" value="Phosphoribosylglycinamide synthetase, C-terminal domain"/>
    <property type="match status" value="1"/>
</dbReference>
<dbReference type="HAMAP" id="MF_00138">
    <property type="entry name" value="GARS"/>
    <property type="match status" value="1"/>
</dbReference>
<dbReference type="InterPro" id="IPR011761">
    <property type="entry name" value="ATP-grasp"/>
</dbReference>
<dbReference type="InterPro" id="IPR013815">
    <property type="entry name" value="ATP_grasp_subdomain_1"/>
</dbReference>
<dbReference type="InterPro" id="IPR016185">
    <property type="entry name" value="PreATP-grasp_dom_sf"/>
</dbReference>
<dbReference type="InterPro" id="IPR020561">
    <property type="entry name" value="PRibGlycinamid_synth_ATP-grasp"/>
</dbReference>
<dbReference type="InterPro" id="IPR000115">
    <property type="entry name" value="PRibGlycinamide_synth"/>
</dbReference>
<dbReference type="InterPro" id="IPR020560">
    <property type="entry name" value="PRibGlycinamide_synth_C-dom"/>
</dbReference>
<dbReference type="InterPro" id="IPR037123">
    <property type="entry name" value="PRibGlycinamide_synth_C_sf"/>
</dbReference>
<dbReference type="InterPro" id="IPR020559">
    <property type="entry name" value="PRibGlycinamide_synth_CS"/>
</dbReference>
<dbReference type="InterPro" id="IPR020562">
    <property type="entry name" value="PRibGlycinamide_synth_N"/>
</dbReference>
<dbReference type="InterPro" id="IPR011054">
    <property type="entry name" value="Rudment_hybrid_motif"/>
</dbReference>
<dbReference type="NCBIfam" id="TIGR00877">
    <property type="entry name" value="purD"/>
    <property type="match status" value="1"/>
</dbReference>
<dbReference type="PANTHER" id="PTHR43472">
    <property type="entry name" value="PHOSPHORIBOSYLAMINE--GLYCINE LIGASE"/>
    <property type="match status" value="1"/>
</dbReference>
<dbReference type="PANTHER" id="PTHR43472:SF1">
    <property type="entry name" value="PHOSPHORIBOSYLAMINE--GLYCINE LIGASE, CHLOROPLASTIC"/>
    <property type="match status" value="1"/>
</dbReference>
<dbReference type="Pfam" id="PF01071">
    <property type="entry name" value="GARS_A"/>
    <property type="match status" value="1"/>
</dbReference>
<dbReference type="Pfam" id="PF02843">
    <property type="entry name" value="GARS_C"/>
    <property type="match status" value="1"/>
</dbReference>
<dbReference type="Pfam" id="PF02844">
    <property type="entry name" value="GARS_N"/>
    <property type="match status" value="1"/>
</dbReference>
<dbReference type="SMART" id="SM01209">
    <property type="entry name" value="GARS_A"/>
    <property type="match status" value="1"/>
</dbReference>
<dbReference type="SMART" id="SM01210">
    <property type="entry name" value="GARS_C"/>
    <property type="match status" value="1"/>
</dbReference>
<dbReference type="SUPFAM" id="SSF56059">
    <property type="entry name" value="Glutathione synthetase ATP-binding domain-like"/>
    <property type="match status" value="1"/>
</dbReference>
<dbReference type="SUPFAM" id="SSF52440">
    <property type="entry name" value="PreATP-grasp domain"/>
    <property type="match status" value="1"/>
</dbReference>
<dbReference type="SUPFAM" id="SSF51246">
    <property type="entry name" value="Rudiment single hybrid motif"/>
    <property type="match status" value="1"/>
</dbReference>
<dbReference type="PROSITE" id="PS50975">
    <property type="entry name" value="ATP_GRASP"/>
    <property type="match status" value="1"/>
</dbReference>
<dbReference type="PROSITE" id="PS00184">
    <property type="entry name" value="GARS"/>
    <property type="match status" value="1"/>
</dbReference>
<evidence type="ECO:0000250" key="1"/>
<evidence type="ECO:0000255" key="2">
    <source>
        <dbReference type="HAMAP-Rule" id="MF_00138"/>
    </source>
</evidence>
<organism>
    <name type="scientific">Pyrococcus furiosus (strain ATCC 43587 / DSM 3638 / JCM 8422 / Vc1)</name>
    <dbReference type="NCBI Taxonomy" id="186497"/>
    <lineage>
        <taxon>Archaea</taxon>
        <taxon>Methanobacteriati</taxon>
        <taxon>Methanobacteriota</taxon>
        <taxon>Thermococci</taxon>
        <taxon>Thermococcales</taxon>
        <taxon>Thermococcaceae</taxon>
        <taxon>Pyrococcus</taxon>
    </lineage>
</organism>